<proteinExistence type="evidence at transcript level"/>
<accession>A2IBF8</accession>
<evidence type="ECO:0000250" key="1"/>
<evidence type="ECO:0000269" key="2">
    <source>
    </source>
</evidence>
<evidence type="ECO:0000305" key="3"/>
<dbReference type="EC" id="5.5.1.6"/>
<dbReference type="EMBL" id="EF187439">
    <property type="protein sequence ID" value="ABM64798.1"/>
    <property type="molecule type" value="mRNA"/>
</dbReference>
<dbReference type="RefSeq" id="NP_001314370.1">
    <property type="nucleotide sequence ID" value="NM_001327441.1"/>
</dbReference>
<dbReference type="SMR" id="A2IBF8"/>
<dbReference type="STRING" id="3635.A2IBF8"/>
<dbReference type="PaxDb" id="3635-A2IBF8"/>
<dbReference type="GeneID" id="107940815"/>
<dbReference type="KEGG" id="ghi:107940815"/>
<dbReference type="BRENDA" id="5.5.1.6">
    <property type="organism ID" value="2499"/>
</dbReference>
<dbReference type="UniPathway" id="UPA00154"/>
<dbReference type="Proteomes" id="UP000189702">
    <property type="component" value="Unplaced"/>
</dbReference>
<dbReference type="GO" id="GO:0005783">
    <property type="term" value="C:endoplasmic reticulum"/>
    <property type="evidence" value="ECO:0000247"/>
    <property type="project" value="AgBase"/>
</dbReference>
<dbReference type="GO" id="GO:0042406">
    <property type="term" value="C:extrinsic component of endoplasmic reticulum membrane"/>
    <property type="evidence" value="ECO:0000247"/>
    <property type="project" value="AgBase"/>
</dbReference>
<dbReference type="GO" id="GO:0005634">
    <property type="term" value="C:nucleus"/>
    <property type="evidence" value="ECO:0000247"/>
    <property type="project" value="AgBase"/>
</dbReference>
<dbReference type="GO" id="GO:0009705">
    <property type="term" value="C:plant-type vacuole membrane"/>
    <property type="evidence" value="ECO:0000247"/>
    <property type="project" value="AgBase"/>
</dbReference>
<dbReference type="GO" id="GO:0045430">
    <property type="term" value="F:chalcone isomerase activity"/>
    <property type="evidence" value="ECO:0007669"/>
    <property type="project" value="UniProtKB-EC"/>
</dbReference>
<dbReference type="GO" id="GO:0009813">
    <property type="term" value="P:flavonoid biosynthetic process"/>
    <property type="evidence" value="ECO:0000247"/>
    <property type="project" value="AgBase"/>
</dbReference>
<dbReference type="GO" id="GO:0043473">
    <property type="term" value="P:pigmentation"/>
    <property type="evidence" value="ECO:0000315"/>
    <property type="project" value="AgBase"/>
</dbReference>
<dbReference type="GO" id="GO:0009733">
    <property type="term" value="P:response to auxin"/>
    <property type="evidence" value="ECO:0000247"/>
    <property type="project" value="AgBase"/>
</dbReference>
<dbReference type="GO" id="GO:0080167">
    <property type="term" value="P:response to karrikin"/>
    <property type="evidence" value="ECO:0000247"/>
    <property type="project" value="AgBase"/>
</dbReference>
<dbReference type="GO" id="GO:0009411">
    <property type="term" value="P:response to UV"/>
    <property type="evidence" value="ECO:0000247"/>
    <property type="project" value="AgBase"/>
</dbReference>
<dbReference type="GO" id="GO:0010224">
    <property type="term" value="P:response to UV-B"/>
    <property type="evidence" value="ECO:0000247"/>
    <property type="project" value="AgBase"/>
</dbReference>
<dbReference type="Gene3D" id="1.10.890.20">
    <property type="match status" value="1"/>
</dbReference>
<dbReference type="Gene3D" id="3.50.70.10">
    <property type="match status" value="1"/>
</dbReference>
<dbReference type="InterPro" id="IPR044164">
    <property type="entry name" value="CFI"/>
</dbReference>
<dbReference type="InterPro" id="IPR016087">
    <property type="entry name" value="Chalcone_isomerase"/>
</dbReference>
<dbReference type="InterPro" id="IPR016088">
    <property type="entry name" value="Chalcone_isomerase_3-sand"/>
</dbReference>
<dbReference type="InterPro" id="IPR016089">
    <property type="entry name" value="Chalcone_isomerase_bundle_sf"/>
</dbReference>
<dbReference type="InterPro" id="IPR036298">
    <property type="entry name" value="Chalcone_isomerase_sf"/>
</dbReference>
<dbReference type="PANTHER" id="PTHR28039:SF8">
    <property type="entry name" value="CHALCONE--FLAVANONE ISOMERASE 1-RELATED"/>
    <property type="match status" value="1"/>
</dbReference>
<dbReference type="PANTHER" id="PTHR28039">
    <property type="entry name" value="CHALCONE--FLAVONONE ISOMERASE 1-RELATED"/>
    <property type="match status" value="1"/>
</dbReference>
<dbReference type="Pfam" id="PF02431">
    <property type="entry name" value="Chalcone"/>
    <property type="match status" value="1"/>
</dbReference>
<dbReference type="SUPFAM" id="SSF54626">
    <property type="entry name" value="Chalcone isomerase"/>
    <property type="match status" value="1"/>
</dbReference>
<keyword id="KW-0284">Flavonoid biosynthesis</keyword>
<keyword id="KW-0413">Isomerase</keyword>
<keyword id="KW-1185">Reference proteome</keyword>
<comment type="function">
    <text evidence="1">Catalyzes the intramolecular cyclization of bicyclic chalcones into tricyclic (S)-flavanones. Responsible for the isomerization of 4,2',4',6'-tetrahydroxychalcone (also termed chalcone) into naringenin (By similarity).</text>
</comment>
<comment type="catalytic activity">
    <reaction>
        <text>a chalcone = a flavanone.</text>
        <dbReference type="EC" id="5.5.1.6"/>
    </reaction>
</comment>
<comment type="pathway">
    <text>Secondary metabolite biosynthesis; flavonoid biosynthesis.</text>
</comment>
<comment type="tissue specificity">
    <text evidence="2">Fibers.</text>
</comment>
<comment type="developmental stage">
    <text evidence="2">In young developing fibers.</text>
</comment>
<comment type="miscellaneous">
    <text>Part of the biosynthetic pathway for all classes of flavonoids, a large class of secondary plant metabolites, many of which are brightly colored.</text>
</comment>
<comment type="similarity">
    <text evidence="3">Belongs to the chalcone isomerase family.</text>
</comment>
<sequence>MSTSLSVTELQVENFTFPPTVKPPGSTKTLFLGGAGERGLEIQGKFIKFTAIGVYLEDSAVNCLGVKWKGKSAVELTESVEFFRDVVTGDFEKFIRVTMILPLTGQQYSEKVSENCVAIWKSLGIYTDAEAKAIEKFIEVFKDENFPPGSSILFTISGQGSLTIGFSKDSSVPEGGKVVIENKLLANSVLESVIGKNGVSPAAKESLASRLSPLFNDCGADSEKPQS</sequence>
<organism>
    <name type="scientific">Gossypium hirsutum</name>
    <name type="common">Upland cotton</name>
    <name type="synonym">Gossypium mexicanum</name>
    <dbReference type="NCBI Taxonomy" id="3635"/>
    <lineage>
        <taxon>Eukaryota</taxon>
        <taxon>Viridiplantae</taxon>
        <taxon>Streptophyta</taxon>
        <taxon>Embryophyta</taxon>
        <taxon>Tracheophyta</taxon>
        <taxon>Spermatophyta</taxon>
        <taxon>Magnoliopsida</taxon>
        <taxon>eudicotyledons</taxon>
        <taxon>Gunneridae</taxon>
        <taxon>Pentapetalae</taxon>
        <taxon>rosids</taxon>
        <taxon>malvids</taxon>
        <taxon>Malvales</taxon>
        <taxon>Malvaceae</taxon>
        <taxon>Malvoideae</taxon>
        <taxon>Gossypium</taxon>
    </lineage>
</organism>
<reference key="1">
    <citation type="journal article" date="2007" name="Biochem. Biophys. Res. Commun.">
        <title>Cotton flavonoid structural genes related to the pigmentation in brown fibers.</title>
        <authorList>
            <person name="Xiao Y.-H."/>
            <person name="Zhang Z.-S."/>
            <person name="Yin M.-H."/>
            <person name="Luo M."/>
            <person name="Li X.-B."/>
            <person name="Hou L."/>
            <person name="Pei Y."/>
        </authorList>
    </citation>
    <scope>NUCLEOTIDE SEQUENCE [MRNA]</scope>
    <scope>TISSUE SPECIFICITY</scope>
    <scope>DEVELOPMENTAL STAGE</scope>
    <source>
        <strain>cv. T586</strain>
        <tissue>Fiber</tissue>
    </source>
</reference>
<feature type="chain" id="PRO_0000300841" description="Chalcone--flavanone isomerase">
    <location>
        <begin position="1"/>
        <end position="227"/>
    </location>
</feature>
<feature type="binding site" evidence="1">
    <location>
        <position position="50"/>
    </location>
    <ligand>
        <name>substrate</name>
    </ligand>
</feature>
<feature type="binding site" evidence="1">
    <location>
        <position position="115"/>
    </location>
    <ligand>
        <name>substrate</name>
    </ligand>
</feature>
<feature type="binding site" evidence="1">
    <location>
        <position position="192"/>
    </location>
    <ligand>
        <name>substrate</name>
    </ligand>
</feature>
<feature type="site" description="Important for catalytic activity" evidence="1">
    <location>
        <position position="108"/>
    </location>
</feature>
<name>CFI_GOSHI</name>
<protein>
    <recommendedName>
        <fullName>Chalcone--flavanone isomerase</fullName>
        <shortName>Chalcone isomerase</shortName>
        <ecNumber>5.5.1.6</ecNumber>
    </recommendedName>
</protein>
<gene>
    <name type="primary">CHI</name>
</gene>